<gene>
    <name evidence="1" type="primary">matK</name>
</gene>
<feature type="chain" id="PRO_0000143346" description="Maturase K">
    <location>
        <begin position="1"/>
        <end position="505"/>
    </location>
</feature>
<comment type="function">
    <text evidence="1">Usually encoded in the trnK tRNA gene intron. Probably assists in splicing its own and other chloroplast group II introns.</text>
</comment>
<comment type="subcellular location">
    <subcellularLocation>
        <location>Plastid</location>
        <location>Chloroplast</location>
    </subcellularLocation>
</comment>
<comment type="similarity">
    <text evidence="1">Belongs to the intron maturase 2 family. MatK subfamily.</text>
</comment>
<reference key="1">
    <citation type="journal article" date="2005" name="Taxon">
        <title>Phylogeny of the tribe Cinchoneae (Rubiaceae), its position in Cinchonoideae, and description of a new genus, Ciliosemina.</title>
        <authorList>
            <person name="Andersson L."/>
            <person name="Antonelli A."/>
        </authorList>
    </citation>
    <scope>NUCLEOTIDE SEQUENCE [GENOMIC DNA]</scope>
</reference>
<dbReference type="EMBL" id="AY538386">
    <property type="protein sequence ID" value="AAT40600.1"/>
    <property type="molecule type" value="Genomic_DNA"/>
</dbReference>
<dbReference type="GO" id="GO:0009507">
    <property type="term" value="C:chloroplast"/>
    <property type="evidence" value="ECO:0007669"/>
    <property type="project" value="UniProtKB-SubCell"/>
</dbReference>
<dbReference type="GO" id="GO:0003723">
    <property type="term" value="F:RNA binding"/>
    <property type="evidence" value="ECO:0007669"/>
    <property type="project" value="UniProtKB-KW"/>
</dbReference>
<dbReference type="GO" id="GO:0006397">
    <property type="term" value="P:mRNA processing"/>
    <property type="evidence" value="ECO:0007669"/>
    <property type="project" value="UniProtKB-KW"/>
</dbReference>
<dbReference type="GO" id="GO:0008380">
    <property type="term" value="P:RNA splicing"/>
    <property type="evidence" value="ECO:0007669"/>
    <property type="project" value="UniProtKB-UniRule"/>
</dbReference>
<dbReference type="GO" id="GO:0008033">
    <property type="term" value="P:tRNA processing"/>
    <property type="evidence" value="ECO:0007669"/>
    <property type="project" value="UniProtKB-KW"/>
</dbReference>
<dbReference type="HAMAP" id="MF_01390">
    <property type="entry name" value="MatK"/>
    <property type="match status" value="1"/>
</dbReference>
<dbReference type="InterPro" id="IPR024937">
    <property type="entry name" value="Domain_X"/>
</dbReference>
<dbReference type="InterPro" id="IPR002866">
    <property type="entry name" value="Maturase_MatK"/>
</dbReference>
<dbReference type="InterPro" id="IPR024942">
    <property type="entry name" value="Maturase_MatK_N"/>
</dbReference>
<dbReference type="PANTHER" id="PTHR34811">
    <property type="entry name" value="MATURASE K"/>
    <property type="match status" value="1"/>
</dbReference>
<dbReference type="PANTHER" id="PTHR34811:SF1">
    <property type="entry name" value="MATURASE K"/>
    <property type="match status" value="1"/>
</dbReference>
<dbReference type="Pfam" id="PF01348">
    <property type="entry name" value="Intron_maturas2"/>
    <property type="match status" value="1"/>
</dbReference>
<dbReference type="Pfam" id="PF01824">
    <property type="entry name" value="MatK_N"/>
    <property type="match status" value="1"/>
</dbReference>
<name>MATK_CUBDO</name>
<sequence>MEEIQRYLQLDRSQQHDFLYPLIFQEYIYALAHDHSLNRSILLENPDYDNQLSFLIVKRLITRMYQQNHFIIFANDSNQNTFLGRNKNLYSQTISEGFSFIVEIPFYIRLIPSQAGKGILKSYNLRSIHSLFPFLENNFSHLNSVLDILIPHSVHLEILVQNLRYWVKDASSLHLLRFLFHEYWNCNPLSATKKRGFDFSPKRSQRLLFFLYNSHVCEYESIFVFLRNQSSHLRSTSFGVFLERIYFYVKMERLVEVFAKDFRASLWLFKDPFMHYVRYQGKSTLVSKGTPLLMNKWKYYLVNFWQCYFDLWVHSGRVYINQLPNHTLNFIGYLSSVRLNPSMVRSQMLENSFLINNAIKKLDTLVPIIPLIGSLAKAKFCNLLGHPISKPAWAGLSDSDIIDRFGQICRNLSHYHSGSSKKKSLYRIKYIIRLSCAKTLARKHKSTVRAFLKRLGSEFLEEFLTLEEEVLSLTFPRASSTFRGEYRSRIWYLDIIYINDLTNSQ</sequence>
<organism>
    <name type="scientific">Cubanola domingensis</name>
    <dbReference type="NCBI Taxonomy" id="60141"/>
    <lineage>
        <taxon>Eukaryota</taxon>
        <taxon>Viridiplantae</taxon>
        <taxon>Streptophyta</taxon>
        <taxon>Embryophyta</taxon>
        <taxon>Tracheophyta</taxon>
        <taxon>Spermatophyta</taxon>
        <taxon>Magnoliopsida</taxon>
        <taxon>eudicotyledons</taxon>
        <taxon>Gunneridae</taxon>
        <taxon>Pentapetalae</taxon>
        <taxon>asterids</taxon>
        <taxon>lamiids</taxon>
        <taxon>Gentianales</taxon>
        <taxon>Rubiaceae</taxon>
        <taxon>Cinchonoideae</taxon>
        <taxon>Chiococceae</taxon>
        <taxon>Cubanola</taxon>
    </lineage>
</organism>
<keyword id="KW-0150">Chloroplast</keyword>
<keyword id="KW-0507">mRNA processing</keyword>
<keyword id="KW-0934">Plastid</keyword>
<keyword id="KW-0694">RNA-binding</keyword>
<keyword id="KW-0819">tRNA processing</keyword>
<evidence type="ECO:0000255" key="1">
    <source>
        <dbReference type="HAMAP-Rule" id="MF_01390"/>
    </source>
</evidence>
<protein>
    <recommendedName>
        <fullName evidence="1">Maturase K</fullName>
    </recommendedName>
    <alternativeName>
        <fullName evidence="1">Intron maturase</fullName>
    </alternativeName>
</protein>
<geneLocation type="chloroplast"/>
<accession>Q5GGR6</accession>
<proteinExistence type="inferred from homology"/>